<name>YCGL_ECO5E</name>
<feature type="chain" id="PRO_0000375297" description="Protein YcgL">
    <location>
        <begin position="1"/>
        <end position="108"/>
    </location>
</feature>
<feature type="domain" description="YcgL" evidence="1">
    <location>
        <begin position="12"/>
        <end position="96"/>
    </location>
</feature>
<protein>
    <recommendedName>
        <fullName evidence="1">Protein YcgL</fullName>
    </recommendedName>
</protein>
<gene>
    <name evidence="1" type="primary">ycgL</name>
    <name type="ordered locus">ECH74115_1665</name>
</gene>
<proteinExistence type="inferred from homology"/>
<sequence length="108" mass="12415">MPKPGILKSKSMFCVIYRSSKRDQTYLYVEKKDDFSRVPEELMKGFGQPQLAMILPLDGRKKLVNADIEKVKQALTEQGYYLQLPPPPEDLLKQHLSVMGQKTDDTNK</sequence>
<reference key="1">
    <citation type="journal article" date="2011" name="Proc. Natl. Acad. Sci. U.S.A.">
        <title>Genomic anatomy of Escherichia coli O157:H7 outbreaks.</title>
        <authorList>
            <person name="Eppinger M."/>
            <person name="Mammel M.K."/>
            <person name="Leclerc J.E."/>
            <person name="Ravel J."/>
            <person name="Cebula T.A."/>
        </authorList>
    </citation>
    <scope>NUCLEOTIDE SEQUENCE [LARGE SCALE GENOMIC DNA]</scope>
    <source>
        <strain>EC4115 / EHEC</strain>
    </source>
</reference>
<evidence type="ECO:0000255" key="1">
    <source>
        <dbReference type="HAMAP-Rule" id="MF_01866"/>
    </source>
</evidence>
<dbReference type="EMBL" id="CP001164">
    <property type="protein sequence ID" value="ACI36604.1"/>
    <property type="molecule type" value="Genomic_DNA"/>
</dbReference>
<dbReference type="SMR" id="B5YXK3"/>
<dbReference type="KEGG" id="ecf:ECH74115_1665"/>
<dbReference type="HOGENOM" id="CLU_155118_1_0_6"/>
<dbReference type="Gene3D" id="3.10.510.20">
    <property type="entry name" value="YcgL domain"/>
    <property type="match status" value="1"/>
</dbReference>
<dbReference type="HAMAP" id="MF_01866">
    <property type="entry name" value="UPF0745"/>
    <property type="match status" value="1"/>
</dbReference>
<dbReference type="InterPro" id="IPR038068">
    <property type="entry name" value="YcgL-like_sf"/>
</dbReference>
<dbReference type="InterPro" id="IPR027354">
    <property type="entry name" value="YcgL_dom"/>
</dbReference>
<dbReference type="PANTHER" id="PTHR38109">
    <property type="entry name" value="PROTEIN YCGL"/>
    <property type="match status" value="1"/>
</dbReference>
<dbReference type="PANTHER" id="PTHR38109:SF1">
    <property type="entry name" value="PROTEIN YCGL"/>
    <property type="match status" value="1"/>
</dbReference>
<dbReference type="Pfam" id="PF05166">
    <property type="entry name" value="YcgL"/>
    <property type="match status" value="1"/>
</dbReference>
<dbReference type="SUPFAM" id="SSF160191">
    <property type="entry name" value="YcgL-like"/>
    <property type="match status" value="1"/>
</dbReference>
<dbReference type="PROSITE" id="PS51648">
    <property type="entry name" value="YCGL"/>
    <property type="match status" value="1"/>
</dbReference>
<accession>B5YXK3</accession>
<organism>
    <name type="scientific">Escherichia coli O157:H7 (strain EC4115 / EHEC)</name>
    <dbReference type="NCBI Taxonomy" id="444450"/>
    <lineage>
        <taxon>Bacteria</taxon>
        <taxon>Pseudomonadati</taxon>
        <taxon>Pseudomonadota</taxon>
        <taxon>Gammaproteobacteria</taxon>
        <taxon>Enterobacterales</taxon>
        <taxon>Enterobacteriaceae</taxon>
        <taxon>Escherichia</taxon>
    </lineage>
</organism>